<evidence type="ECO:0000250" key="1">
    <source>
        <dbReference type="UniProtKB" id="O64743"/>
    </source>
</evidence>
<evidence type="ECO:0000255" key="2"/>
<evidence type="ECO:0000255" key="3">
    <source>
        <dbReference type="PROSITE-ProRule" id="PRU00498"/>
    </source>
</evidence>
<evidence type="ECO:0000255" key="4">
    <source>
        <dbReference type="PROSITE-ProRule" id="PRU00718"/>
    </source>
</evidence>
<evidence type="ECO:0000303" key="5">
    <source>
    </source>
</evidence>
<evidence type="ECO:0000305" key="6"/>
<evidence type="ECO:0000312" key="7">
    <source>
        <dbReference type="Araport" id="AT4G20820"/>
    </source>
</evidence>
<evidence type="ECO:0000312" key="8">
    <source>
        <dbReference type="EMBL" id="CAB45848.1"/>
    </source>
</evidence>
<accession>Q9SVG5</accession>
<keyword id="KW-0134">Cell wall</keyword>
<keyword id="KW-1015">Disulfide bond</keyword>
<keyword id="KW-0274">FAD</keyword>
<keyword id="KW-0285">Flavoprotein</keyword>
<keyword id="KW-0325">Glycoprotein</keyword>
<keyword id="KW-0547">Nucleotide-binding</keyword>
<keyword id="KW-0560">Oxidoreductase</keyword>
<keyword id="KW-1185">Reference proteome</keyword>
<keyword id="KW-0964">Secreted</keyword>
<keyword id="KW-0732">Signal</keyword>
<proteinExistence type="inferred from homology"/>
<protein>
    <recommendedName>
        <fullName evidence="5">Berberine bridge enzyme-like 18</fullName>
        <shortName evidence="5">AtBBE-like 18</shortName>
        <ecNumber evidence="1">1.1.1.-</ecNumber>
    </recommendedName>
</protein>
<name>BBE18_ARATH</name>
<dbReference type="EC" id="1.1.1.-" evidence="1"/>
<dbReference type="EMBL" id="AL080254">
    <property type="protein sequence ID" value="CAB45848.1"/>
    <property type="molecule type" value="Genomic_DNA"/>
</dbReference>
<dbReference type="EMBL" id="AL161553">
    <property type="protein sequence ID" value="CAB79082.1"/>
    <property type="molecule type" value="Genomic_DNA"/>
</dbReference>
<dbReference type="EMBL" id="CP002687">
    <property type="protein sequence ID" value="AEE84364.1"/>
    <property type="molecule type" value="Genomic_DNA"/>
</dbReference>
<dbReference type="PIR" id="T10624">
    <property type="entry name" value="T10624"/>
</dbReference>
<dbReference type="RefSeq" id="NP_193814.1">
    <property type="nucleotide sequence ID" value="NM_118200.2"/>
</dbReference>
<dbReference type="SMR" id="Q9SVG5"/>
<dbReference type="FunCoup" id="Q9SVG5">
    <property type="interactions" value="53"/>
</dbReference>
<dbReference type="STRING" id="3702.Q9SVG5"/>
<dbReference type="GlyGen" id="Q9SVG5">
    <property type="glycosylation" value="8 sites"/>
</dbReference>
<dbReference type="PaxDb" id="3702-AT4G20820.1"/>
<dbReference type="ProteomicsDB" id="240638"/>
<dbReference type="EnsemblPlants" id="AT4G20820.1">
    <property type="protein sequence ID" value="AT4G20820.1"/>
    <property type="gene ID" value="AT4G20820"/>
</dbReference>
<dbReference type="GeneID" id="827830"/>
<dbReference type="Gramene" id="AT4G20820.1">
    <property type="protein sequence ID" value="AT4G20820.1"/>
    <property type="gene ID" value="AT4G20820"/>
</dbReference>
<dbReference type="KEGG" id="ath:AT4G20820"/>
<dbReference type="Araport" id="AT4G20820"/>
<dbReference type="TAIR" id="AT4G20820">
    <property type="gene designation" value="ATBBE18"/>
</dbReference>
<dbReference type="eggNOG" id="ENOG502QVGN">
    <property type="taxonomic scope" value="Eukaryota"/>
</dbReference>
<dbReference type="HOGENOM" id="CLU_018354_6_0_1"/>
<dbReference type="InParanoid" id="Q9SVG5"/>
<dbReference type="OMA" id="DFVQEPM"/>
<dbReference type="PhylomeDB" id="Q9SVG5"/>
<dbReference type="BioCyc" id="ARA:AT4G20820-MONOMER"/>
<dbReference type="PRO" id="PR:Q9SVG5"/>
<dbReference type="Proteomes" id="UP000006548">
    <property type="component" value="Chromosome 4"/>
</dbReference>
<dbReference type="ExpressionAtlas" id="Q9SVG5">
    <property type="expression patterns" value="baseline and differential"/>
</dbReference>
<dbReference type="GO" id="GO:0005576">
    <property type="term" value="C:extracellular region"/>
    <property type="evidence" value="ECO:0007669"/>
    <property type="project" value="UniProtKB-KW"/>
</dbReference>
<dbReference type="GO" id="GO:0009505">
    <property type="term" value="C:plant-type cell wall"/>
    <property type="evidence" value="ECO:0000250"/>
    <property type="project" value="UniProtKB"/>
</dbReference>
<dbReference type="GO" id="GO:0071949">
    <property type="term" value="F:FAD binding"/>
    <property type="evidence" value="ECO:0007669"/>
    <property type="project" value="InterPro"/>
</dbReference>
<dbReference type="GO" id="GO:0016491">
    <property type="term" value="F:oxidoreductase activity"/>
    <property type="evidence" value="ECO:0007669"/>
    <property type="project" value="UniProtKB-KW"/>
</dbReference>
<dbReference type="FunFam" id="3.30.43.10:FF:000004">
    <property type="entry name" value="Berberine bridge enzyme-like 15"/>
    <property type="match status" value="1"/>
</dbReference>
<dbReference type="Gene3D" id="3.30.465.10">
    <property type="match status" value="1"/>
</dbReference>
<dbReference type="Gene3D" id="3.40.462.20">
    <property type="match status" value="1"/>
</dbReference>
<dbReference type="Gene3D" id="3.30.43.10">
    <property type="entry name" value="Uridine Diphospho-n-acetylenolpyruvylglucosamine Reductase, domain 2"/>
    <property type="match status" value="1"/>
</dbReference>
<dbReference type="InterPro" id="IPR012951">
    <property type="entry name" value="BBE"/>
</dbReference>
<dbReference type="InterPro" id="IPR016166">
    <property type="entry name" value="FAD-bd_PCMH"/>
</dbReference>
<dbReference type="InterPro" id="IPR036318">
    <property type="entry name" value="FAD-bd_PCMH-like_sf"/>
</dbReference>
<dbReference type="InterPro" id="IPR016167">
    <property type="entry name" value="FAD-bd_PCMH_sub1"/>
</dbReference>
<dbReference type="InterPro" id="IPR016169">
    <property type="entry name" value="FAD-bd_PCMH_sub2"/>
</dbReference>
<dbReference type="InterPro" id="IPR006094">
    <property type="entry name" value="Oxid_FAD_bind_N"/>
</dbReference>
<dbReference type="InterPro" id="IPR006093">
    <property type="entry name" value="Oxy_OxRdtase_FAD_BS"/>
</dbReference>
<dbReference type="PANTHER" id="PTHR32448">
    <property type="entry name" value="OS08G0158400 PROTEIN"/>
    <property type="match status" value="1"/>
</dbReference>
<dbReference type="Pfam" id="PF08031">
    <property type="entry name" value="BBE"/>
    <property type="match status" value="1"/>
</dbReference>
<dbReference type="Pfam" id="PF01565">
    <property type="entry name" value="FAD_binding_4"/>
    <property type="match status" value="1"/>
</dbReference>
<dbReference type="SUPFAM" id="SSF56176">
    <property type="entry name" value="FAD-binding/transporter-associated domain-like"/>
    <property type="match status" value="1"/>
</dbReference>
<dbReference type="PROSITE" id="PS51387">
    <property type="entry name" value="FAD_PCMH"/>
    <property type="match status" value="1"/>
</dbReference>
<dbReference type="PROSITE" id="PS00862">
    <property type="entry name" value="OX2_COVAL_FAD"/>
    <property type="match status" value="1"/>
</dbReference>
<feature type="signal peptide" evidence="2">
    <location>
        <begin position="1"/>
        <end position="29"/>
    </location>
</feature>
<feature type="chain" id="PRO_5008180479" description="Berberine bridge enzyme-like 18">
    <location>
        <begin position="30"/>
        <end position="532"/>
    </location>
</feature>
<feature type="domain" description="FAD-binding PCMH-type" evidence="4">
    <location>
        <begin position="80"/>
        <end position="254"/>
    </location>
</feature>
<feature type="glycosylation site" description="N-linked (GlcNAc...) asparagine" evidence="3">
    <location>
        <position position="30"/>
    </location>
</feature>
<feature type="glycosylation site" description="N-linked (GlcNAc...) asparagine" evidence="3">
    <location>
        <position position="33"/>
    </location>
</feature>
<feature type="glycosylation site" description="N-linked (GlcNAc...) asparagine" evidence="3">
    <location>
        <position position="46"/>
    </location>
</feature>
<feature type="glycosylation site" description="N-linked (GlcNAc...) asparagine" evidence="3">
    <location>
        <position position="59"/>
    </location>
</feature>
<feature type="glycosylation site" description="N-linked (GlcNAc...) asparagine" evidence="3">
    <location>
        <position position="147"/>
    </location>
</feature>
<feature type="glycosylation site" description="N-linked (GlcNAc...) asparagine" evidence="3">
    <location>
        <position position="169"/>
    </location>
</feature>
<feature type="glycosylation site" description="N-linked (GlcNAc...) asparagine" evidence="3">
    <location>
        <position position="262"/>
    </location>
</feature>
<feature type="disulfide bond" evidence="1">
    <location>
        <begin position="40"/>
        <end position="102"/>
    </location>
</feature>
<feature type="cross-link" description="6-(S-cysteinyl)-8alpha-(pros-histidyl)-FAD (His-Cys)" evidence="1">
    <location>
        <begin position="117"/>
        <end position="179"/>
    </location>
</feature>
<gene>
    <name evidence="7" type="ordered locus">At4g20820</name>
    <name evidence="8" type="ORF">F21C20.170</name>
</gene>
<organism>
    <name type="scientific">Arabidopsis thaliana</name>
    <name type="common">Mouse-ear cress</name>
    <dbReference type="NCBI Taxonomy" id="3702"/>
    <lineage>
        <taxon>Eukaryota</taxon>
        <taxon>Viridiplantae</taxon>
        <taxon>Streptophyta</taxon>
        <taxon>Embryophyta</taxon>
        <taxon>Tracheophyta</taxon>
        <taxon>Spermatophyta</taxon>
        <taxon>Magnoliopsida</taxon>
        <taxon>eudicotyledons</taxon>
        <taxon>Gunneridae</taxon>
        <taxon>Pentapetalae</taxon>
        <taxon>rosids</taxon>
        <taxon>malvids</taxon>
        <taxon>Brassicales</taxon>
        <taxon>Brassicaceae</taxon>
        <taxon>Camelineae</taxon>
        <taxon>Arabidopsis</taxon>
    </lineage>
</organism>
<comment type="cofactor">
    <cofactor evidence="1">
        <name>FAD</name>
        <dbReference type="ChEBI" id="CHEBI:57692"/>
    </cofactor>
    <text evidence="1">Binds 1 FAD per subunit in a bicovalent manner.</text>
</comment>
<comment type="subcellular location">
    <subcellularLocation>
        <location evidence="1">Secreted</location>
        <location evidence="1">Cell wall</location>
    </subcellularLocation>
</comment>
<comment type="PTM">
    <text evidence="1">The FAD cofactor is bound via a bicovalent 6-S-cysteinyl, 8alpha-N1-histidyl FAD linkage.</text>
</comment>
<comment type="similarity">
    <text evidence="6">Belongs to the oxygen-dependent FAD-linked oxidoreductase family.</text>
</comment>
<sequence>MKFQSFFSSVLIFFTTSTLLLSIPHPVSANRSNQSSFLQCLSLQLNDSNIVSKVIHTPNDTSFSSVLASSIQNQRFSAPDVPKPVLILTPVQPSDVQSAVKCARRFGIHIRTRSGGHDYEGLSYVTHKPFVILDLRNLRSITVDVDNRSVWVQTGATIGELYYEIGKKNRTLAFPAGVCPTVGVGGHFSGGGYGTLLRKHGLAADHVIDARVVDARGRILERREMGEDFFWAIRGGGGSSFCVVLSWKIGLINVPSTVTVFNVTKFSEQSALKIIHRWQFVADKVSDDLFIRVMLQRYKNMVRASFPGLYLGSVKNLLKMVNKEFPELGLEEDDCTEMSWIESVIWFAELGEEPINVLTKRTRASLAFKAKSDFVQEPMPKTAISKLWRRLQEPEAEHAQLIFTPFGGKMSEIADYETPFPHRKGNIYEIQYLNYWRGDVKEKYMRWVERVYDDMSEFVAKSPRGAYINLRDLDLGMYVGVKRSKYEEGKSWGVKYFKNNFERLVRVKTSVDPSDFFCDEQSIPPFTFVEVI</sequence>
<reference key="1">
    <citation type="journal article" date="1999" name="Nature">
        <title>Sequence and analysis of chromosome 4 of the plant Arabidopsis thaliana.</title>
        <authorList>
            <person name="Mayer K.F.X."/>
            <person name="Schueller C."/>
            <person name="Wambutt R."/>
            <person name="Murphy G."/>
            <person name="Volckaert G."/>
            <person name="Pohl T."/>
            <person name="Duesterhoeft A."/>
            <person name="Stiekema W."/>
            <person name="Entian K.-D."/>
            <person name="Terryn N."/>
            <person name="Harris B."/>
            <person name="Ansorge W."/>
            <person name="Brandt P."/>
            <person name="Grivell L.A."/>
            <person name="Rieger M."/>
            <person name="Weichselgartner M."/>
            <person name="de Simone V."/>
            <person name="Obermaier B."/>
            <person name="Mache R."/>
            <person name="Mueller M."/>
            <person name="Kreis M."/>
            <person name="Delseny M."/>
            <person name="Puigdomenech P."/>
            <person name="Watson M."/>
            <person name="Schmidtheini T."/>
            <person name="Reichert B."/>
            <person name="Portetelle D."/>
            <person name="Perez-Alonso M."/>
            <person name="Boutry M."/>
            <person name="Bancroft I."/>
            <person name="Vos P."/>
            <person name="Hoheisel J."/>
            <person name="Zimmermann W."/>
            <person name="Wedler H."/>
            <person name="Ridley P."/>
            <person name="Langham S.-A."/>
            <person name="McCullagh B."/>
            <person name="Bilham L."/>
            <person name="Robben J."/>
            <person name="van der Schueren J."/>
            <person name="Grymonprez B."/>
            <person name="Chuang Y.-J."/>
            <person name="Vandenbussche F."/>
            <person name="Braeken M."/>
            <person name="Weltjens I."/>
            <person name="Voet M."/>
            <person name="Bastiaens I."/>
            <person name="Aert R."/>
            <person name="Defoor E."/>
            <person name="Weitzenegger T."/>
            <person name="Bothe G."/>
            <person name="Ramsperger U."/>
            <person name="Hilbert H."/>
            <person name="Braun M."/>
            <person name="Holzer E."/>
            <person name="Brandt A."/>
            <person name="Peters S."/>
            <person name="van Staveren M."/>
            <person name="Dirkse W."/>
            <person name="Mooijman P."/>
            <person name="Klein Lankhorst R."/>
            <person name="Rose M."/>
            <person name="Hauf J."/>
            <person name="Koetter P."/>
            <person name="Berneiser S."/>
            <person name="Hempel S."/>
            <person name="Feldpausch M."/>
            <person name="Lamberth S."/>
            <person name="Van den Daele H."/>
            <person name="De Keyser A."/>
            <person name="Buysshaert C."/>
            <person name="Gielen J."/>
            <person name="Villarroel R."/>
            <person name="De Clercq R."/>
            <person name="van Montagu M."/>
            <person name="Rogers J."/>
            <person name="Cronin A."/>
            <person name="Quail M.A."/>
            <person name="Bray-Allen S."/>
            <person name="Clark L."/>
            <person name="Doggett J."/>
            <person name="Hall S."/>
            <person name="Kay M."/>
            <person name="Lennard N."/>
            <person name="McLay K."/>
            <person name="Mayes R."/>
            <person name="Pettett A."/>
            <person name="Rajandream M.A."/>
            <person name="Lyne M."/>
            <person name="Benes V."/>
            <person name="Rechmann S."/>
            <person name="Borkova D."/>
            <person name="Bloecker H."/>
            <person name="Scharfe M."/>
            <person name="Grimm M."/>
            <person name="Loehnert T.-H."/>
            <person name="Dose S."/>
            <person name="de Haan M."/>
            <person name="Maarse A.C."/>
            <person name="Schaefer M."/>
            <person name="Mueller-Auer S."/>
            <person name="Gabel C."/>
            <person name="Fuchs M."/>
            <person name="Fartmann B."/>
            <person name="Granderath K."/>
            <person name="Dauner D."/>
            <person name="Herzl A."/>
            <person name="Neumann S."/>
            <person name="Argiriou A."/>
            <person name="Vitale D."/>
            <person name="Liguori R."/>
            <person name="Piravandi E."/>
            <person name="Massenet O."/>
            <person name="Quigley F."/>
            <person name="Clabauld G."/>
            <person name="Muendlein A."/>
            <person name="Felber R."/>
            <person name="Schnabl S."/>
            <person name="Hiller R."/>
            <person name="Schmidt W."/>
            <person name="Lecharny A."/>
            <person name="Aubourg S."/>
            <person name="Chefdor F."/>
            <person name="Cooke R."/>
            <person name="Berger C."/>
            <person name="Monfort A."/>
            <person name="Casacuberta E."/>
            <person name="Gibbons T."/>
            <person name="Weber N."/>
            <person name="Vandenbol M."/>
            <person name="Bargues M."/>
            <person name="Terol J."/>
            <person name="Torres A."/>
            <person name="Perez-Perez A."/>
            <person name="Purnelle B."/>
            <person name="Bent E."/>
            <person name="Johnson S."/>
            <person name="Tacon D."/>
            <person name="Jesse T."/>
            <person name="Heijnen L."/>
            <person name="Schwarz S."/>
            <person name="Scholler P."/>
            <person name="Heber S."/>
            <person name="Francs P."/>
            <person name="Bielke C."/>
            <person name="Frishman D."/>
            <person name="Haase D."/>
            <person name="Lemcke K."/>
            <person name="Mewes H.-W."/>
            <person name="Stocker S."/>
            <person name="Zaccaria P."/>
            <person name="Bevan M."/>
            <person name="Wilson R.K."/>
            <person name="de la Bastide M."/>
            <person name="Habermann K."/>
            <person name="Parnell L."/>
            <person name="Dedhia N."/>
            <person name="Gnoj L."/>
            <person name="Schutz K."/>
            <person name="Huang E."/>
            <person name="Spiegel L."/>
            <person name="Sekhon M."/>
            <person name="Murray J."/>
            <person name="Sheet P."/>
            <person name="Cordes M."/>
            <person name="Abu-Threideh J."/>
            <person name="Stoneking T."/>
            <person name="Kalicki J."/>
            <person name="Graves T."/>
            <person name="Harmon G."/>
            <person name="Edwards J."/>
            <person name="Latreille P."/>
            <person name="Courtney L."/>
            <person name="Cloud J."/>
            <person name="Abbott A."/>
            <person name="Scott K."/>
            <person name="Johnson D."/>
            <person name="Minx P."/>
            <person name="Bentley D."/>
            <person name="Fulton B."/>
            <person name="Miller N."/>
            <person name="Greco T."/>
            <person name="Kemp K."/>
            <person name="Kramer J."/>
            <person name="Fulton L."/>
            <person name="Mardis E."/>
            <person name="Dante M."/>
            <person name="Pepin K."/>
            <person name="Hillier L.W."/>
            <person name="Nelson J."/>
            <person name="Spieth J."/>
            <person name="Ryan E."/>
            <person name="Andrews S."/>
            <person name="Geisel C."/>
            <person name="Layman D."/>
            <person name="Du H."/>
            <person name="Ali J."/>
            <person name="Berghoff A."/>
            <person name="Jones K."/>
            <person name="Drone K."/>
            <person name="Cotton M."/>
            <person name="Joshu C."/>
            <person name="Antonoiu B."/>
            <person name="Zidanic M."/>
            <person name="Strong C."/>
            <person name="Sun H."/>
            <person name="Lamar B."/>
            <person name="Yordan C."/>
            <person name="Ma P."/>
            <person name="Zhong J."/>
            <person name="Preston R."/>
            <person name="Vil D."/>
            <person name="Shekher M."/>
            <person name="Matero A."/>
            <person name="Shah R."/>
            <person name="Swaby I.K."/>
            <person name="O'Shaughnessy A."/>
            <person name="Rodriguez M."/>
            <person name="Hoffman J."/>
            <person name="Till S."/>
            <person name="Granat S."/>
            <person name="Shohdy N."/>
            <person name="Hasegawa A."/>
            <person name="Hameed A."/>
            <person name="Lodhi M."/>
            <person name="Johnson A."/>
            <person name="Chen E."/>
            <person name="Marra M.A."/>
            <person name="Martienssen R."/>
            <person name="McCombie W.R."/>
        </authorList>
    </citation>
    <scope>NUCLEOTIDE SEQUENCE [LARGE SCALE GENOMIC DNA]</scope>
    <source>
        <strain>cv. Columbia</strain>
    </source>
</reference>
<reference key="2">
    <citation type="journal article" date="2017" name="Plant J.">
        <title>Araport11: a complete reannotation of the Arabidopsis thaliana reference genome.</title>
        <authorList>
            <person name="Cheng C.Y."/>
            <person name="Krishnakumar V."/>
            <person name="Chan A.P."/>
            <person name="Thibaud-Nissen F."/>
            <person name="Schobel S."/>
            <person name="Town C.D."/>
        </authorList>
    </citation>
    <scope>GENOME REANNOTATION</scope>
    <source>
        <strain>cv. Columbia</strain>
    </source>
</reference>
<reference key="3">
    <citation type="journal article" date="2015" name="J. Biol. Chem.">
        <title>Oxidation of monolignols by members of the berberine bridge enzyme family suggests a role in plant cell wall metabolism.</title>
        <authorList>
            <person name="Daniel B."/>
            <person name="Pavkov-Keller T."/>
            <person name="Steiner B."/>
            <person name="Dordic A."/>
            <person name="Gutmann A."/>
            <person name="Nidetzky B."/>
            <person name="Sensen C.W."/>
            <person name="van der Graaff E."/>
            <person name="Wallner S."/>
            <person name="Gruber K."/>
            <person name="Macheroux P."/>
        </authorList>
    </citation>
    <scope>GENE FAMILY</scope>
    <scope>NOMENCLATURE</scope>
</reference>